<proteinExistence type="inferred from homology"/>
<keyword id="KW-0378">Hydrolase</keyword>
<keyword id="KW-0479">Metal-binding</keyword>
<keyword id="KW-0546">Nucleotide metabolism</keyword>
<keyword id="KW-0862">Zinc</keyword>
<feature type="chain" id="PRO_0000194398" description="Adenosine deaminase">
    <location>
        <begin position="1"/>
        <end position="334"/>
    </location>
</feature>
<feature type="active site" description="Proton donor" evidence="1">
    <location>
        <position position="200"/>
    </location>
</feature>
<feature type="binding site" evidence="1">
    <location>
        <position position="12"/>
    </location>
    <ligand>
        <name>Zn(2+)</name>
        <dbReference type="ChEBI" id="CHEBI:29105"/>
        <note>catalytic</note>
    </ligand>
</feature>
<feature type="binding site" evidence="1">
    <location>
        <position position="14"/>
    </location>
    <ligand>
        <name>substrate</name>
    </ligand>
</feature>
<feature type="binding site" evidence="1">
    <location>
        <position position="14"/>
    </location>
    <ligand>
        <name>Zn(2+)</name>
        <dbReference type="ChEBI" id="CHEBI:29105"/>
        <note>catalytic</note>
    </ligand>
</feature>
<feature type="binding site" evidence="1">
    <location>
        <position position="16"/>
    </location>
    <ligand>
        <name>substrate</name>
    </ligand>
</feature>
<feature type="binding site" evidence="1">
    <location>
        <position position="170"/>
    </location>
    <ligand>
        <name>substrate</name>
    </ligand>
</feature>
<feature type="binding site" evidence="1">
    <location>
        <position position="197"/>
    </location>
    <ligand>
        <name>Zn(2+)</name>
        <dbReference type="ChEBI" id="CHEBI:29105"/>
        <note>catalytic</note>
    </ligand>
</feature>
<feature type="binding site" evidence="1">
    <location>
        <position position="278"/>
    </location>
    <ligand>
        <name>Zn(2+)</name>
        <dbReference type="ChEBI" id="CHEBI:29105"/>
        <note>catalytic</note>
    </ligand>
</feature>
<feature type="binding site" evidence="1">
    <location>
        <position position="279"/>
    </location>
    <ligand>
        <name>substrate</name>
    </ligand>
</feature>
<feature type="site" description="Important for catalytic activity" evidence="1">
    <location>
        <position position="221"/>
    </location>
</feature>
<protein>
    <recommendedName>
        <fullName evidence="1">Adenosine deaminase</fullName>
        <ecNumber evidence="1">3.5.4.4</ecNumber>
    </recommendedName>
    <alternativeName>
        <fullName evidence="1">Adenosine aminohydrolase</fullName>
    </alternativeName>
</protein>
<accession>Q87TF3</accession>
<organism>
    <name type="scientific">Vibrio parahaemolyticus serotype O3:K6 (strain RIMD 2210633)</name>
    <dbReference type="NCBI Taxonomy" id="223926"/>
    <lineage>
        <taxon>Bacteria</taxon>
        <taxon>Pseudomonadati</taxon>
        <taxon>Pseudomonadota</taxon>
        <taxon>Gammaproteobacteria</taxon>
        <taxon>Vibrionales</taxon>
        <taxon>Vibrionaceae</taxon>
        <taxon>Vibrio</taxon>
    </lineage>
</organism>
<name>ADD_VIBPA</name>
<comment type="function">
    <text evidence="1">Catalyzes the hydrolytic deamination of adenosine and 2-deoxyadenosine.</text>
</comment>
<comment type="catalytic activity">
    <reaction evidence="1">
        <text>adenosine + H2O + H(+) = inosine + NH4(+)</text>
        <dbReference type="Rhea" id="RHEA:24408"/>
        <dbReference type="ChEBI" id="CHEBI:15377"/>
        <dbReference type="ChEBI" id="CHEBI:15378"/>
        <dbReference type="ChEBI" id="CHEBI:16335"/>
        <dbReference type="ChEBI" id="CHEBI:17596"/>
        <dbReference type="ChEBI" id="CHEBI:28938"/>
        <dbReference type="EC" id="3.5.4.4"/>
    </reaction>
    <physiologicalReaction direction="left-to-right" evidence="1">
        <dbReference type="Rhea" id="RHEA:24409"/>
    </physiologicalReaction>
</comment>
<comment type="catalytic activity">
    <reaction evidence="1">
        <text>2'-deoxyadenosine + H2O + H(+) = 2'-deoxyinosine + NH4(+)</text>
        <dbReference type="Rhea" id="RHEA:28190"/>
        <dbReference type="ChEBI" id="CHEBI:15377"/>
        <dbReference type="ChEBI" id="CHEBI:15378"/>
        <dbReference type="ChEBI" id="CHEBI:17256"/>
        <dbReference type="ChEBI" id="CHEBI:28938"/>
        <dbReference type="ChEBI" id="CHEBI:28997"/>
        <dbReference type="EC" id="3.5.4.4"/>
    </reaction>
    <physiologicalReaction direction="left-to-right" evidence="1">
        <dbReference type="Rhea" id="RHEA:28191"/>
    </physiologicalReaction>
</comment>
<comment type="cofactor">
    <cofactor evidence="1">
        <name>Zn(2+)</name>
        <dbReference type="ChEBI" id="CHEBI:29105"/>
    </cofactor>
    <text evidence="1">Binds 1 zinc ion per subunit.</text>
</comment>
<comment type="similarity">
    <text evidence="1">Belongs to the metallo-dependent hydrolases superfamily. Adenosine and AMP deaminases family. Adenosine deaminase subfamily.</text>
</comment>
<reference key="1">
    <citation type="journal article" date="2003" name="Lancet">
        <title>Genome sequence of Vibrio parahaemolyticus: a pathogenic mechanism distinct from that of V. cholerae.</title>
        <authorList>
            <person name="Makino K."/>
            <person name="Oshima K."/>
            <person name="Kurokawa K."/>
            <person name="Yokoyama K."/>
            <person name="Uda T."/>
            <person name="Tagomori K."/>
            <person name="Iijima Y."/>
            <person name="Najima M."/>
            <person name="Nakano M."/>
            <person name="Yamashita A."/>
            <person name="Kubota Y."/>
            <person name="Kimura S."/>
            <person name="Yasunaga T."/>
            <person name="Honda T."/>
            <person name="Shinagawa H."/>
            <person name="Hattori M."/>
            <person name="Iida T."/>
        </authorList>
    </citation>
    <scope>NUCLEOTIDE SEQUENCE [LARGE SCALE GENOMIC DNA]</scope>
    <source>
        <strain>RIMD 2210633</strain>
    </source>
</reference>
<gene>
    <name evidence="1" type="primary">add</name>
    <name type="synonym">add1</name>
    <name type="ordered locus">VP0116</name>
</gene>
<dbReference type="EC" id="3.5.4.4" evidence="1"/>
<dbReference type="EMBL" id="BA000031">
    <property type="protein sequence ID" value="BAC58379.1"/>
    <property type="molecule type" value="Genomic_DNA"/>
</dbReference>
<dbReference type="RefSeq" id="NP_796495.1">
    <property type="nucleotide sequence ID" value="NC_004603.1"/>
</dbReference>
<dbReference type="RefSeq" id="WP_005478706.1">
    <property type="nucleotide sequence ID" value="NC_004603.1"/>
</dbReference>
<dbReference type="SMR" id="Q87TF3"/>
<dbReference type="GeneID" id="1187583"/>
<dbReference type="KEGG" id="vpa:VP0116"/>
<dbReference type="PATRIC" id="fig|223926.6.peg.107"/>
<dbReference type="eggNOG" id="COG1816">
    <property type="taxonomic scope" value="Bacteria"/>
</dbReference>
<dbReference type="HOGENOM" id="CLU_039228_0_2_6"/>
<dbReference type="Proteomes" id="UP000002493">
    <property type="component" value="Chromosome 1"/>
</dbReference>
<dbReference type="GO" id="GO:0005829">
    <property type="term" value="C:cytosol"/>
    <property type="evidence" value="ECO:0007669"/>
    <property type="project" value="TreeGrafter"/>
</dbReference>
<dbReference type="GO" id="GO:0046936">
    <property type="term" value="F:2'-deoxyadenosine deaminase activity"/>
    <property type="evidence" value="ECO:0007669"/>
    <property type="project" value="RHEA"/>
</dbReference>
<dbReference type="GO" id="GO:0004000">
    <property type="term" value="F:adenosine deaminase activity"/>
    <property type="evidence" value="ECO:0007669"/>
    <property type="project" value="UniProtKB-UniRule"/>
</dbReference>
<dbReference type="GO" id="GO:0008270">
    <property type="term" value="F:zinc ion binding"/>
    <property type="evidence" value="ECO:0007669"/>
    <property type="project" value="UniProtKB-UniRule"/>
</dbReference>
<dbReference type="GO" id="GO:0006154">
    <property type="term" value="P:adenosine catabolic process"/>
    <property type="evidence" value="ECO:0007669"/>
    <property type="project" value="TreeGrafter"/>
</dbReference>
<dbReference type="GO" id="GO:0043103">
    <property type="term" value="P:hypoxanthine salvage"/>
    <property type="evidence" value="ECO:0007669"/>
    <property type="project" value="TreeGrafter"/>
</dbReference>
<dbReference type="GO" id="GO:0046103">
    <property type="term" value="P:inosine biosynthetic process"/>
    <property type="evidence" value="ECO:0007669"/>
    <property type="project" value="TreeGrafter"/>
</dbReference>
<dbReference type="GO" id="GO:0009117">
    <property type="term" value="P:nucleotide metabolic process"/>
    <property type="evidence" value="ECO:0007669"/>
    <property type="project" value="UniProtKB-KW"/>
</dbReference>
<dbReference type="GO" id="GO:0009168">
    <property type="term" value="P:purine ribonucleoside monophosphate biosynthetic process"/>
    <property type="evidence" value="ECO:0007669"/>
    <property type="project" value="UniProtKB-UniRule"/>
</dbReference>
<dbReference type="CDD" id="cd01320">
    <property type="entry name" value="ADA"/>
    <property type="match status" value="1"/>
</dbReference>
<dbReference type="FunFam" id="3.20.20.140:FF:000009">
    <property type="entry name" value="Adenosine deaminase"/>
    <property type="match status" value="1"/>
</dbReference>
<dbReference type="Gene3D" id="3.20.20.140">
    <property type="entry name" value="Metal-dependent hydrolases"/>
    <property type="match status" value="1"/>
</dbReference>
<dbReference type="HAMAP" id="MF_00540">
    <property type="entry name" value="A_deaminase"/>
    <property type="match status" value="1"/>
</dbReference>
<dbReference type="InterPro" id="IPR028893">
    <property type="entry name" value="A_deaminase"/>
</dbReference>
<dbReference type="InterPro" id="IPR001365">
    <property type="entry name" value="A_deaminase_dom"/>
</dbReference>
<dbReference type="InterPro" id="IPR006330">
    <property type="entry name" value="Ado/ade_deaminase"/>
</dbReference>
<dbReference type="InterPro" id="IPR032466">
    <property type="entry name" value="Metal_Hydrolase"/>
</dbReference>
<dbReference type="NCBIfam" id="TIGR01430">
    <property type="entry name" value="aden_deam"/>
    <property type="match status" value="1"/>
</dbReference>
<dbReference type="NCBIfam" id="NF006846">
    <property type="entry name" value="PRK09358.1-1"/>
    <property type="match status" value="1"/>
</dbReference>
<dbReference type="PANTHER" id="PTHR11409">
    <property type="entry name" value="ADENOSINE DEAMINASE"/>
    <property type="match status" value="1"/>
</dbReference>
<dbReference type="PANTHER" id="PTHR11409:SF43">
    <property type="entry name" value="ADENOSINE DEAMINASE"/>
    <property type="match status" value="1"/>
</dbReference>
<dbReference type="Pfam" id="PF00962">
    <property type="entry name" value="A_deaminase"/>
    <property type="match status" value="1"/>
</dbReference>
<dbReference type="SUPFAM" id="SSF51556">
    <property type="entry name" value="Metallo-dependent hydrolases"/>
    <property type="match status" value="1"/>
</dbReference>
<evidence type="ECO:0000255" key="1">
    <source>
        <dbReference type="HAMAP-Rule" id="MF_00540"/>
    </source>
</evidence>
<sequence length="334" mass="36436">MITKNLPLTDLHRHLDGNIRTKTILELGQKFGIALPAYDIESLTPHVQIVEAEPSLVAFLSKLDWGVAVLGDLDACRRVAYENVEDALNAQIDYAELRFSPYYMAMKHKLPVAGVVEAVVDGVQAGMRDFGIKANLIGIMSRTFGTDACQQELDAILSQKDHIVAVDLAGDELGQPGERFVSHFKQVRDAGLNVTVHAGEAAGAESMWQAIQELGATRIGHGVKAIHDPKLMDYLAENRIGIESCLTSNFQTSTVDSLANHPLKQFLDHGVLACLNTDDPAVEGIELPYEYEVAAPAAGLSQEQIRQAQINGLELAFISDAEKAELKEKVKDRV</sequence>